<name>RNPA_PROM9</name>
<sequence length="128" mass="15132">MALPKDMRLKGHRTFNYIHKNSIKYHGKLMTFKVARSNPEILLSHNHTNASNNFRAAIAISKKVSKKAVDRNKIRRILQEWLITNIPKINSHKPYWLLVNLKFGDFCNDKNKLLEEFQNLMFKSRLIK</sequence>
<proteinExistence type="inferred from homology"/>
<evidence type="ECO:0000255" key="1">
    <source>
        <dbReference type="HAMAP-Rule" id="MF_00227"/>
    </source>
</evidence>
<keyword id="KW-0255">Endonuclease</keyword>
<keyword id="KW-0378">Hydrolase</keyword>
<keyword id="KW-0540">Nuclease</keyword>
<keyword id="KW-0694">RNA-binding</keyword>
<keyword id="KW-0819">tRNA processing</keyword>
<accession>Q319V1</accession>
<feature type="chain" id="PRO_1000194661" description="Ribonuclease P protein component">
    <location>
        <begin position="1"/>
        <end position="128"/>
    </location>
</feature>
<reference key="1">
    <citation type="journal article" date="2006" name="Science">
        <title>Genomic islands and the ecology and evolution of Prochlorococcus.</title>
        <authorList>
            <person name="Coleman M.L."/>
            <person name="Sullivan M.B."/>
            <person name="Martiny A.C."/>
            <person name="Steglich C."/>
            <person name="Barry K."/>
            <person name="Delong E.F."/>
            <person name="Chisholm S.W."/>
        </authorList>
    </citation>
    <scope>NUCLEOTIDE SEQUENCE [LARGE SCALE GENOMIC DNA]</scope>
    <source>
        <strain>MIT 9312</strain>
    </source>
</reference>
<protein>
    <recommendedName>
        <fullName evidence="1">Ribonuclease P protein component</fullName>
        <shortName evidence="1">RNase P protein</shortName>
        <shortName evidence="1">RNaseP protein</shortName>
        <ecNumber evidence="1">3.1.26.5</ecNumber>
    </recommendedName>
    <alternativeName>
        <fullName evidence="1">Protein C5</fullName>
    </alternativeName>
</protein>
<gene>
    <name evidence="1" type="primary">rnpA</name>
    <name type="ordered locus">PMT9312_1285</name>
</gene>
<dbReference type="EC" id="3.1.26.5" evidence="1"/>
<dbReference type="EMBL" id="CP000111">
    <property type="protein sequence ID" value="ABB50344.1"/>
    <property type="molecule type" value="Genomic_DNA"/>
</dbReference>
<dbReference type="RefSeq" id="WP_011376830.1">
    <property type="nucleotide sequence ID" value="NC_007577.1"/>
</dbReference>
<dbReference type="SMR" id="Q319V1"/>
<dbReference type="STRING" id="74546.PMT9312_1285"/>
<dbReference type="KEGG" id="pmi:PMT9312_1285"/>
<dbReference type="eggNOG" id="COG0594">
    <property type="taxonomic scope" value="Bacteria"/>
</dbReference>
<dbReference type="HOGENOM" id="CLU_117179_2_0_3"/>
<dbReference type="OrthoDB" id="540358at2"/>
<dbReference type="Proteomes" id="UP000002715">
    <property type="component" value="Chromosome"/>
</dbReference>
<dbReference type="GO" id="GO:0030677">
    <property type="term" value="C:ribonuclease P complex"/>
    <property type="evidence" value="ECO:0007669"/>
    <property type="project" value="TreeGrafter"/>
</dbReference>
<dbReference type="GO" id="GO:0042781">
    <property type="term" value="F:3'-tRNA processing endoribonuclease activity"/>
    <property type="evidence" value="ECO:0007669"/>
    <property type="project" value="TreeGrafter"/>
</dbReference>
<dbReference type="GO" id="GO:0004526">
    <property type="term" value="F:ribonuclease P activity"/>
    <property type="evidence" value="ECO:0007669"/>
    <property type="project" value="UniProtKB-UniRule"/>
</dbReference>
<dbReference type="GO" id="GO:0000049">
    <property type="term" value="F:tRNA binding"/>
    <property type="evidence" value="ECO:0007669"/>
    <property type="project" value="UniProtKB-UniRule"/>
</dbReference>
<dbReference type="GO" id="GO:0001682">
    <property type="term" value="P:tRNA 5'-leader removal"/>
    <property type="evidence" value="ECO:0007669"/>
    <property type="project" value="UniProtKB-UniRule"/>
</dbReference>
<dbReference type="Gene3D" id="3.30.230.10">
    <property type="match status" value="1"/>
</dbReference>
<dbReference type="HAMAP" id="MF_00227">
    <property type="entry name" value="RNase_P"/>
    <property type="match status" value="1"/>
</dbReference>
<dbReference type="InterPro" id="IPR020568">
    <property type="entry name" value="Ribosomal_Su5_D2-typ_SF"/>
</dbReference>
<dbReference type="InterPro" id="IPR014721">
    <property type="entry name" value="Ribsml_uS5_D2-typ_fold_subgr"/>
</dbReference>
<dbReference type="InterPro" id="IPR000100">
    <property type="entry name" value="RNase_P"/>
</dbReference>
<dbReference type="PANTHER" id="PTHR33992">
    <property type="entry name" value="RIBONUCLEASE P PROTEIN COMPONENT"/>
    <property type="match status" value="1"/>
</dbReference>
<dbReference type="PANTHER" id="PTHR33992:SF1">
    <property type="entry name" value="RIBONUCLEASE P PROTEIN COMPONENT"/>
    <property type="match status" value="1"/>
</dbReference>
<dbReference type="Pfam" id="PF00825">
    <property type="entry name" value="Ribonuclease_P"/>
    <property type="match status" value="1"/>
</dbReference>
<dbReference type="SUPFAM" id="SSF54211">
    <property type="entry name" value="Ribosomal protein S5 domain 2-like"/>
    <property type="match status" value="1"/>
</dbReference>
<comment type="function">
    <text evidence="1">RNaseP catalyzes the removal of the 5'-leader sequence from pre-tRNA to produce the mature 5'-terminus. It can also cleave other RNA substrates such as 4.5S RNA. The protein component plays an auxiliary but essential role in vivo by binding to the 5'-leader sequence and broadening the substrate specificity of the ribozyme.</text>
</comment>
<comment type="catalytic activity">
    <reaction evidence="1">
        <text>Endonucleolytic cleavage of RNA, removing 5'-extranucleotides from tRNA precursor.</text>
        <dbReference type="EC" id="3.1.26.5"/>
    </reaction>
</comment>
<comment type="subunit">
    <text evidence="1">Consists of a catalytic RNA component (M1 or rnpB) and a protein subunit.</text>
</comment>
<comment type="similarity">
    <text evidence="1">Belongs to the RnpA family.</text>
</comment>
<organism>
    <name type="scientific">Prochlorococcus marinus (strain MIT 9312)</name>
    <dbReference type="NCBI Taxonomy" id="74546"/>
    <lineage>
        <taxon>Bacteria</taxon>
        <taxon>Bacillati</taxon>
        <taxon>Cyanobacteriota</taxon>
        <taxon>Cyanophyceae</taxon>
        <taxon>Synechococcales</taxon>
        <taxon>Prochlorococcaceae</taxon>
        <taxon>Prochlorococcus</taxon>
    </lineage>
</organism>